<protein>
    <recommendedName>
        <fullName evidence="1">Octanoyltransferase</fullName>
        <ecNumber evidence="1">2.3.1.181</ecNumber>
    </recommendedName>
    <alternativeName>
        <fullName evidence="1">Lipoate-protein ligase B</fullName>
    </alternativeName>
    <alternativeName>
        <fullName evidence="1">Lipoyl/octanoyl transferase</fullName>
    </alternativeName>
    <alternativeName>
        <fullName evidence="1">Octanoyl-[acyl-carrier-protein]-protein N-octanoyltransferase</fullName>
    </alternativeName>
</protein>
<name>LIPB_PROMA</name>
<reference key="1">
    <citation type="journal article" date="2003" name="Proc. Natl. Acad. Sci. U.S.A.">
        <title>Genome sequence of the cyanobacterium Prochlorococcus marinus SS120, a nearly minimal oxyphototrophic genome.</title>
        <authorList>
            <person name="Dufresne A."/>
            <person name="Salanoubat M."/>
            <person name="Partensky F."/>
            <person name="Artiguenave F."/>
            <person name="Axmann I.M."/>
            <person name="Barbe V."/>
            <person name="Duprat S."/>
            <person name="Galperin M.Y."/>
            <person name="Koonin E.V."/>
            <person name="Le Gall F."/>
            <person name="Makarova K.S."/>
            <person name="Ostrowski M."/>
            <person name="Oztas S."/>
            <person name="Robert C."/>
            <person name="Rogozin I.B."/>
            <person name="Scanlan D.J."/>
            <person name="Tandeau de Marsac N."/>
            <person name="Weissenbach J."/>
            <person name="Wincker P."/>
            <person name="Wolf Y.I."/>
            <person name="Hess W.R."/>
        </authorList>
    </citation>
    <scope>NUCLEOTIDE SEQUENCE [LARGE SCALE GENOMIC DNA]</scope>
    <source>
        <strain>SARG / CCMP1375 / SS120</strain>
    </source>
</reference>
<organism>
    <name type="scientific">Prochlorococcus marinus (strain SARG / CCMP1375 / SS120)</name>
    <dbReference type="NCBI Taxonomy" id="167539"/>
    <lineage>
        <taxon>Bacteria</taxon>
        <taxon>Bacillati</taxon>
        <taxon>Cyanobacteriota</taxon>
        <taxon>Cyanophyceae</taxon>
        <taxon>Synechococcales</taxon>
        <taxon>Prochlorococcaceae</taxon>
        <taxon>Prochlorococcus</taxon>
    </lineage>
</organism>
<dbReference type="EC" id="2.3.1.181" evidence="1"/>
<dbReference type="EMBL" id="AE017126">
    <property type="protein sequence ID" value="AAP99444.1"/>
    <property type="molecule type" value="Genomic_DNA"/>
</dbReference>
<dbReference type="RefSeq" id="NP_874792.1">
    <property type="nucleotide sequence ID" value="NC_005042.1"/>
</dbReference>
<dbReference type="RefSeq" id="WP_011124553.1">
    <property type="nucleotide sequence ID" value="NC_005042.1"/>
</dbReference>
<dbReference type="SMR" id="Q7VDH8"/>
<dbReference type="STRING" id="167539.Pro_0398"/>
<dbReference type="EnsemblBacteria" id="AAP99444">
    <property type="protein sequence ID" value="AAP99444"/>
    <property type="gene ID" value="Pro_0398"/>
</dbReference>
<dbReference type="KEGG" id="pma:Pro_0398"/>
<dbReference type="PATRIC" id="fig|167539.5.peg.406"/>
<dbReference type="eggNOG" id="COG0321">
    <property type="taxonomic scope" value="Bacteria"/>
</dbReference>
<dbReference type="HOGENOM" id="CLU_035168_1_0_3"/>
<dbReference type="OrthoDB" id="9787061at2"/>
<dbReference type="UniPathway" id="UPA00538">
    <property type="reaction ID" value="UER00592"/>
</dbReference>
<dbReference type="Proteomes" id="UP000001420">
    <property type="component" value="Chromosome"/>
</dbReference>
<dbReference type="GO" id="GO:0005737">
    <property type="term" value="C:cytoplasm"/>
    <property type="evidence" value="ECO:0007669"/>
    <property type="project" value="UniProtKB-SubCell"/>
</dbReference>
<dbReference type="GO" id="GO:0033819">
    <property type="term" value="F:lipoyl(octanoyl) transferase activity"/>
    <property type="evidence" value="ECO:0007669"/>
    <property type="project" value="UniProtKB-EC"/>
</dbReference>
<dbReference type="GO" id="GO:0036211">
    <property type="term" value="P:protein modification process"/>
    <property type="evidence" value="ECO:0007669"/>
    <property type="project" value="InterPro"/>
</dbReference>
<dbReference type="CDD" id="cd16444">
    <property type="entry name" value="LipB"/>
    <property type="match status" value="1"/>
</dbReference>
<dbReference type="Gene3D" id="3.30.930.10">
    <property type="entry name" value="Bira Bifunctional Protein, Domain 2"/>
    <property type="match status" value="1"/>
</dbReference>
<dbReference type="HAMAP" id="MF_00013">
    <property type="entry name" value="LipB"/>
    <property type="match status" value="1"/>
</dbReference>
<dbReference type="InterPro" id="IPR045864">
    <property type="entry name" value="aa-tRNA-synth_II/BPL/LPL"/>
</dbReference>
<dbReference type="InterPro" id="IPR004143">
    <property type="entry name" value="BPL_LPL_catalytic"/>
</dbReference>
<dbReference type="InterPro" id="IPR000544">
    <property type="entry name" value="Octanoyltransferase"/>
</dbReference>
<dbReference type="InterPro" id="IPR020605">
    <property type="entry name" value="Octanoyltransferase_CS"/>
</dbReference>
<dbReference type="NCBIfam" id="TIGR00214">
    <property type="entry name" value="lipB"/>
    <property type="match status" value="1"/>
</dbReference>
<dbReference type="PANTHER" id="PTHR10993:SF7">
    <property type="entry name" value="LIPOYLTRANSFERASE 2, MITOCHONDRIAL-RELATED"/>
    <property type="match status" value="1"/>
</dbReference>
<dbReference type="PANTHER" id="PTHR10993">
    <property type="entry name" value="OCTANOYLTRANSFERASE"/>
    <property type="match status" value="1"/>
</dbReference>
<dbReference type="Pfam" id="PF21948">
    <property type="entry name" value="LplA-B_cat"/>
    <property type="match status" value="1"/>
</dbReference>
<dbReference type="PIRSF" id="PIRSF016262">
    <property type="entry name" value="LPLase"/>
    <property type="match status" value="1"/>
</dbReference>
<dbReference type="SUPFAM" id="SSF55681">
    <property type="entry name" value="Class II aaRS and biotin synthetases"/>
    <property type="match status" value="1"/>
</dbReference>
<dbReference type="PROSITE" id="PS51733">
    <property type="entry name" value="BPL_LPL_CATALYTIC"/>
    <property type="match status" value="1"/>
</dbReference>
<dbReference type="PROSITE" id="PS01313">
    <property type="entry name" value="LIPB"/>
    <property type="match status" value="1"/>
</dbReference>
<accession>Q7VDH8</accession>
<evidence type="ECO:0000255" key="1">
    <source>
        <dbReference type="HAMAP-Rule" id="MF_00013"/>
    </source>
</evidence>
<evidence type="ECO:0000255" key="2">
    <source>
        <dbReference type="PROSITE-ProRule" id="PRU01067"/>
    </source>
</evidence>
<comment type="function">
    <text evidence="1">Catalyzes the transfer of endogenously produced octanoic acid from octanoyl-acyl-carrier-protein onto the lipoyl domains of lipoate-dependent enzymes. Lipoyl-ACP can also act as a substrate although octanoyl-ACP is likely to be the physiological substrate.</text>
</comment>
<comment type="catalytic activity">
    <reaction evidence="1">
        <text>octanoyl-[ACP] + L-lysyl-[protein] = N(6)-octanoyl-L-lysyl-[protein] + holo-[ACP] + H(+)</text>
        <dbReference type="Rhea" id="RHEA:17665"/>
        <dbReference type="Rhea" id="RHEA-COMP:9636"/>
        <dbReference type="Rhea" id="RHEA-COMP:9685"/>
        <dbReference type="Rhea" id="RHEA-COMP:9752"/>
        <dbReference type="Rhea" id="RHEA-COMP:9928"/>
        <dbReference type="ChEBI" id="CHEBI:15378"/>
        <dbReference type="ChEBI" id="CHEBI:29969"/>
        <dbReference type="ChEBI" id="CHEBI:64479"/>
        <dbReference type="ChEBI" id="CHEBI:78463"/>
        <dbReference type="ChEBI" id="CHEBI:78809"/>
        <dbReference type="EC" id="2.3.1.181"/>
    </reaction>
</comment>
<comment type="pathway">
    <text evidence="1">Protein modification; protein lipoylation via endogenous pathway; protein N(6)-(lipoyl)lysine from octanoyl-[acyl-carrier-protein]: step 1/2.</text>
</comment>
<comment type="subcellular location">
    <subcellularLocation>
        <location evidence="1">Cytoplasm</location>
    </subcellularLocation>
</comment>
<comment type="miscellaneous">
    <text evidence="1">In the reaction, the free carboxyl group of octanoic acid is attached via an amide linkage to the epsilon-amino group of a specific lysine residue of lipoyl domains of lipoate-dependent enzymes.</text>
</comment>
<comment type="similarity">
    <text evidence="1">Belongs to the LipB family.</text>
</comment>
<sequence length="224" mass="26017">MHNLVINDLPEEGLPTALFEPSELIDFKIAWDWQRKWQEKLLAEPSNKQAVWMLEHFDCYTLGRGASEDNLLFDVEKPPIDFYRIDRGGDVTHHLPGQLVVYLVLDLRRYKTDLDWYLRQLENVLLDVLDGLGLNGYRINGMTGVWCNGKKVASIGISCRRWITQHGIALNVDCDLLGFNQIVPCGLKDYQTGRLNSWLPKLQMKEVRFLMKKSLNKRFGLLWI</sequence>
<keyword id="KW-0012">Acyltransferase</keyword>
<keyword id="KW-0963">Cytoplasm</keyword>
<keyword id="KW-1185">Reference proteome</keyword>
<keyword id="KW-0808">Transferase</keyword>
<gene>
    <name evidence="1" type="primary">lipB</name>
    <name type="ordered locus">Pro_0398</name>
</gene>
<proteinExistence type="inferred from homology"/>
<feature type="chain" id="PRO_0000062863" description="Octanoyltransferase">
    <location>
        <begin position="1"/>
        <end position="224"/>
    </location>
</feature>
<feature type="domain" description="BPL/LPL catalytic" evidence="2">
    <location>
        <begin position="45"/>
        <end position="223"/>
    </location>
</feature>
<feature type="active site" description="Acyl-thioester intermediate" evidence="1">
    <location>
        <position position="185"/>
    </location>
</feature>
<feature type="binding site" evidence="1">
    <location>
        <begin position="87"/>
        <end position="94"/>
    </location>
    <ligand>
        <name>substrate</name>
    </ligand>
</feature>
<feature type="binding site" evidence="1">
    <location>
        <begin position="154"/>
        <end position="156"/>
    </location>
    <ligand>
        <name>substrate</name>
    </ligand>
</feature>
<feature type="binding site" evidence="1">
    <location>
        <begin position="167"/>
        <end position="169"/>
    </location>
    <ligand>
        <name>substrate</name>
    </ligand>
</feature>
<feature type="site" description="Lowers pKa of active site Cys" evidence="1">
    <location>
        <position position="151"/>
    </location>
</feature>